<keyword id="KW-0460">Magnesium</keyword>
<keyword id="KW-1185">Reference proteome</keyword>
<keyword id="KW-0808">Transferase</keyword>
<comment type="function">
    <text evidence="1">Catalyzes the transfer of the 2-phospholactate moiety from (2S)-lactyl-2-diphospho-5'-guanosine to 7,8-didemethyl-8-hydroxy-5-deazariboflavin (FO) with the formation of oxidized coenzyme F420-0 and GMP.</text>
</comment>
<comment type="catalytic activity">
    <reaction evidence="1">
        <text>(2S)-lactyl-2-diphospho-5'-guanosine + 7,8-didemethyl-8-hydroxy-5-deazariboflavin = oxidized coenzyme F420-0 + GMP + H(+)</text>
        <dbReference type="Rhea" id="RHEA:63444"/>
        <dbReference type="ChEBI" id="CHEBI:15378"/>
        <dbReference type="ChEBI" id="CHEBI:58115"/>
        <dbReference type="ChEBI" id="CHEBI:59435"/>
        <dbReference type="ChEBI" id="CHEBI:59904"/>
        <dbReference type="ChEBI" id="CHEBI:59907"/>
        <dbReference type="EC" id="2.7.8.28"/>
    </reaction>
</comment>
<comment type="cofactor">
    <cofactor evidence="1">
        <name>Mg(2+)</name>
        <dbReference type="ChEBI" id="CHEBI:18420"/>
    </cofactor>
</comment>
<comment type="pathway">
    <text evidence="1">Cofactor biosynthesis; coenzyme F420 biosynthesis.</text>
</comment>
<comment type="subunit">
    <text evidence="1">Homodimer.</text>
</comment>
<comment type="similarity">
    <text evidence="1">Belongs to the CofD family.</text>
</comment>
<feature type="chain" id="PRO_0000145776" description="2-phospho-L-lactate transferase">
    <location>
        <begin position="1"/>
        <end position="306"/>
    </location>
</feature>
<feature type="binding site" evidence="1">
    <location>
        <position position="54"/>
    </location>
    <ligand>
        <name>7,8-didemethyl-8-hydroxy-5-deazariboflavin</name>
        <dbReference type="ChEBI" id="CHEBI:59904"/>
    </ligand>
</feature>
<feature type="binding site" evidence="1">
    <location>
        <position position="93"/>
    </location>
    <ligand>
        <name>7,8-didemethyl-8-hydroxy-5-deazariboflavin</name>
        <dbReference type="ChEBI" id="CHEBI:59904"/>
    </ligand>
</feature>
<reference key="1">
    <citation type="journal article" date="1997" name="J. Bacteriol.">
        <title>Complete genome sequence of Methanobacterium thermoautotrophicum deltaH: functional analysis and comparative genomics.</title>
        <authorList>
            <person name="Smith D.R."/>
            <person name="Doucette-Stamm L.A."/>
            <person name="Deloughery C."/>
            <person name="Lee H.-M."/>
            <person name="Dubois J."/>
            <person name="Aldredge T."/>
            <person name="Bashirzadeh R."/>
            <person name="Blakely D."/>
            <person name="Cook R."/>
            <person name="Gilbert K."/>
            <person name="Harrison D."/>
            <person name="Hoang L."/>
            <person name="Keagle P."/>
            <person name="Lumm W."/>
            <person name="Pothier B."/>
            <person name="Qiu D."/>
            <person name="Spadafora R."/>
            <person name="Vicare R."/>
            <person name="Wang Y."/>
            <person name="Wierzbowski J."/>
            <person name="Gibson R."/>
            <person name="Jiwani N."/>
            <person name="Caruso A."/>
            <person name="Bush D."/>
            <person name="Safer H."/>
            <person name="Patwell D."/>
            <person name="Prabhakar S."/>
            <person name="McDougall S."/>
            <person name="Shimer G."/>
            <person name="Goyal A."/>
            <person name="Pietrovski S."/>
            <person name="Church G.M."/>
            <person name="Daniels C.J."/>
            <person name="Mao J.-I."/>
            <person name="Rice P."/>
            <person name="Noelling J."/>
            <person name="Reeve J.N."/>
        </authorList>
    </citation>
    <scope>NUCLEOTIDE SEQUENCE [LARGE SCALE GENOMIC DNA]</scope>
    <source>
        <strain>ATCC 29096 / DSM 1053 / JCM 10044 / NBRC 100330 / Delta H</strain>
    </source>
</reference>
<protein>
    <recommendedName>
        <fullName evidence="1">2-phospho-L-lactate transferase</fullName>
        <ecNumber evidence="1">2.7.8.28</ecNumber>
    </recommendedName>
</protein>
<dbReference type="EC" id="2.7.8.28" evidence="1"/>
<dbReference type="EMBL" id="AE000666">
    <property type="protein sequence ID" value="AAB85514.1"/>
    <property type="molecule type" value="Genomic_DNA"/>
</dbReference>
<dbReference type="PIR" id="G69002">
    <property type="entry name" value="G69002"/>
</dbReference>
<dbReference type="SMR" id="O27097"/>
<dbReference type="FunCoup" id="O27097">
    <property type="interactions" value="90"/>
</dbReference>
<dbReference type="STRING" id="187420.MTH_1018"/>
<dbReference type="PaxDb" id="187420-MTH_1018"/>
<dbReference type="EnsemblBacteria" id="AAB85514">
    <property type="protein sequence ID" value="AAB85514"/>
    <property type="gene ID" value="MTH_1018"/>
</dbReference>
<dbReference type="KEGG" id="mth:MTH_1018"/>
<dbReference type="PATRIC" id="fig|187420.15.peg.1001"/>
<dbReference type="HOGENOM" id="CLU_055795_1_0_2"/>
<dbReference type="InParanoid" id="O27097"/>
<dbReference type="UniPathway" id="UPA00071"/>
<dbReference type="Proteomes" id="UP000005223">
    <property type="component" value="Chromosome"/>
</dbReference>
<dbReference type="GO" id="GO:0043743">
    <property type="term" value="F:LPPG:FO 2-phospho-L-lactate transferase activity"/>
    <property type="evidence" value="ECO:0007669"/>
    <property type="project" value="UniProtKB-EC"/>
</dbReference>
<dbReference type="GO" id="GO:0000287">
    <property type="term" value="F:magnesium ion binding"/>
    <property type="evidence" value="ECO:0007669"/>
    <property type="project" value="InterPro"/>
</dbReference>
<dbReference type="GO" id="GO:0052645">
    <property type="term" value="P:F420-0 metabolic process"/>
    <property type="evidence" value="ECO:0007669"/>
    <property type="project" value="UniProtKB-UniRule"/>
</dbReference>
<dbReference type="CDD" id="cd07186">
    <property type="entry name" value="CofD_like"/>
    <property type="match status" value="1"/>
</dbReference>
<dbReference type="Gene3D" id="1.10.8.240">
    <property type="entry name" value="CofD-like domain"/>
    <property type="match status" value="1"/>
</dbReference>
<dbReference type="Gene3D" id="3.40.50.10680">
    <property type="entry name" value="CofD-like domains"/>
    <property type="match status" value="1"/>
</dbReference>
<dbReference type="HAMAP" id="MF_01257">
    <property type="entry name" value="CofD"/>
    <property type="match status" value="1"/>
</dbReference>
<dbReference type="InterPro" id="IPR002882">
    <property type="entry name" value="CofD"/>
</dbReference>
<dbReference type="InterPro" id="IPR038136">
    <property type="entry name" value="CofD-like_dom_sf"/>
</dbReference>
<dbReference type="InterPro" id="IPR010115">
    <property type="entry name" value="FbiA/CofD"/>
</dbReference>
<dbReference type="NCBIfam" id="TIGR01819">
    <property type="entry name" value="F420_cofD"/>
    <property type="match status" value="1"/>
</dbReference>
<dbReference type="PANTHER" id="PTHR43007">
    <property type="entry name" value="2-PHOSPHO-L-LACTATE TRANSFERASE"/>
    <property type="match status" value="1"/>
</dbReference>
<dbReference type="PANTHER" id="PTHR43007:SF1">
    <property type="entry name" value="2-PHOSPHO-L-LACTATE TRANSFERASE"/>
    <property type="match status" value="1"/>
</dbReference>
<dbReference type="Pfam" id="PF01933">
    <property type="entry name" value="CofD"/>
    <property type="match status" value="1"/>
</dbReference>
<dbReference type="SUPFAM" id="SSF142338">
    <property type="entry name" value="CofD-like"/>
    <property type="match status" value="1"/>
</dbReference>
<organism>
    <name type="scientific">Methanothermobacter thermautotrophicus (strain ATCC 29096 / DSM 1053 / JCM 10044 / NBRC 100330 / Delta H)</name>
    <name type="common">Methanobacterium thermoautotrophicum</name>
    <dbReference type="NCBI Taxonomy" id="187420"/>
    <lineage>
        <taxon>Archaea</taxon>
        <taxon>Methanobacteriati</taxon>
        <taxon>Methanobacteriota</taxon>
        <taxon>Methanomada group</taxon>
        <taxon>Methanobacteria</taxon>
        <taxon>Methanobacteriales</taxon>
        <taxon>Methanobacteriaceae</taxon>
        <taxon>Methanothermobacter</taxon>
    </lineage>
</organism>
<proteinExistence type="inferred from homology"/>
<gene>
    <name evidence="1" type="primary">cofD</name>
    <name type="ordered locus">MTH_1018</name>
</gene>
<accession>O27097</accession>
<evidence type="ECO:0000255" key="1">
    <source>
        <dbReference type="HAMAP-Rule" id="MF_01257"/>
    </source>
</evidence>
<sequence>MWRQSMITVLSGGTGTPKLLQGLVRVVDPEEITVIVNTVENGYLSGVYVAPDVDTVLYTLAGIINEETWYGVEGDTFITHETLRELGCPELLRIGDRDRAFKIQKTLLLGEMPLHRAVEIQSRALGVESRVLPMSNEDSDIVIVTDEGDMEFHEFLVERRSEPGVLDVRFSRVKPAPGVLDAIESADMVILGPSNPVTSIGPIINMEGVTDSLRKVNVSAVSPFTGGRPFSGPAGKFMEAKGYDASSLGVAEIYADFLDRLVIDETDSDLKGEIEKLIKEVTITKTNMENIGDKIMLARILLGEIL</sequence>
<name>COFD_METTH</name>